<dbReference type="EMBL" id="CP000114">
    <property type="protein sequence ID" value="ABA45205.1"/>
    <property type="molecule type" value="Genomic_DNA"/>
</dbReference>
<dbReference type="RefSeq" id="WP_000138202.1">
    <property type="nucleotide sequence ID" value="NC_007432.1"/>
</dbReference>
<dbReference type="SMR" id="Q3K425"/>
<dbReference type="GeneID" id="66884915"/>
<dbReference type="KEGG" id="sak:SAK_0001"/>
<dbReference type="HOGENOM" id="CLU_026910_3_1_9"/>
<dbReference type="GO" id="GO:0005737">
    <property type="term" value="C:cytoplasm"/>
    <property type="evidence" value="ECO:0007669"/>
    <property type="project" value="UniProtKB-SubCell"/>
</dbReference>
<dbReference type="GO" id="GO:0005886">
    <property type="term" value="C:plasma membrane"/>
    <property type="evidence" value="ECO:0007669"/>
    <property type="project" value="TreeGrafter"/>
</dbReference>
<dbReference type="GO" id="GO:0005524">
    <property type="term" value="F:ATP binding"/>
    <property type="evidence" value="ECO:0007669"/>
    <property type="project" value="UniProtKB-UniRule"/>
</dbReference>
<dbReference type="GO" id="GO:0016887">
    <property type="term" value="F:ATP hydrolysis activity"/>
    <property type="evidence" value="ECO:0007669"/>
    <property type="project" value="InterPro"/>
</dbReference>
<dbReference type="GO" id="GO:0003688">
    <property type="term" value="F:DNA replication origin binding"/>
    <property type="evidence" value="ECO:0007669"/>
    <property type="project" value="UniProtKB-UniRule"/>
</dbReference>
<dbReference type="GO" id="GO:0008289">
    <property type="term" value="F:lipid binding"/>
    <property type="evidence" value="ECO:0007669"/>
    <property type="project" value="UniProtKB-KW"/>
</dbReference>
<dbReference type="GO" id="GO:0006270">
    <property type="term" value="P:DNA replication initiation"/>
    <property type="evidence" value="ECO:0007669"/>
    <property type="project" value="UniProtKB-UniRule"/>
</dbReference>
<dbReference type="GO" id="GO:0006275">
    <property type="term" value="P:regulation of DNA replication"/>
    <property type="evidence" value="ECO:0007669"/>
    <property type="project" value="UniProtKB-UniRule"/>
</dbReference>
<dbReference type="CDD" id="cd00009">
    <property type="entry name" value="AAA"/>
    <property type="match status" value="1"/>
</dbReference>
<dbReference type="CDD" id="cd06571">
    <property type="entry name" value="Bac_DnaA_C"/>
    <property type="match status" value="1"/>
</dbReference>
<dbReference type="FunFam" id="1.10.1750.10:FF:000002">
    <property type="entry name" value="Chromosomal replication initiator protein DnaA"/>
    <property type="match status" value="1"/>
</dbReference>
<dbReference type="FunFam" id="3.40.50.300:FF:000668">
    <property type="entry name" value="Chromosomal replication initiator protein DnaA"/>
    <property type="match status" value="1"/>
</dbReference>
<dbReference type="Gene3D" id="1.10.1750.10">
    <property type="match status" value="1"/>
</dbReference>
<dbReference type="Gene3D" id="1.10.8.60">
    <property type="match status" value="1"/>
</dbReference>
<dbReference type="Gene3D" id="3.40.50.300">
    <property type="entry name" value="P-loop containing nucleotide triphosphate hydrolases"/>
    <property type="match status" value="1"/>
</dbReference>
<dbReference type="HAMAP" id="MF_00377">
    <property type="entry name" value="DnaA_bact"/>
    <property type="match status" value="1"/>
</dbReference>
<dbReference type="InterPro" id="IPR003593">
    <property type="entry name" value="AAA+_ATPase"/>
</dbReference>
<dbReference type="InterPro" id="IPR001957">
    <property type="entry name" value="Chromosome_initiator_DnaA"/>
</dbReference>
<dbReference type="InterPro" id="IPR020591">
    <property type="entry name" value="Chromosome_initiator_DnaA-like"/>
</dbReference>
<dbReference type="InterPro" id="IPR018312">
    <property type="entry name" value="Chromosome_initiator_DnaA_CS"/>
</dbReference>
<dbReference type="InterPro" id="IPR013159">
    <property type="entry name" value="DnaA_C"/>
</dbReference>
<dbReference type="InterPro" id="IPR013317">
    <property type="entry name" value="DnaA_dom"/>
</dbReference>
<dbReference type="InterPro" id="IPR027417">
    <property type="entry name" value="P-loop_NTPase"/>
</dbReference>
<dbReference type="InterPro" id="IPR010921">
    <property type="entry name" value="Trp_repressor/repl_initiator"/>
</dbReference>
<dbReference type="NCBIfam" id="TIGR00362">
    <property type="entry name" value="DnaA"/>
    <property type="match status" value="1"/>
</dbReference>
<dbReference type="PANTHER" id="PTHR30050">
    <property type="entry name" value="CHROMOSOMAL REPLICATION INITIATOR PROTEIN DNAA"/>
    <property type="match status" value="1"/>
</dbReference>
<dbReference type="PANTHER" id="PTHR30050:SF2">
    <property type="entry name" value="CHROMOSOMAL REPLICATION INITIATOR PROTEIN DNAA"/>
    <property type="match status" value="1"/>
</dbReference>
<dbReference type="Pfam" id="PF00308">
    <property type="entry name" value="Bac_DnaA"/>
    <property type="match status" value="1"/>
</dbReference>
<dbReference type="Pfam" id="PF08299">
    <property type="entry name" value="Bac_DnaA_C"/>
    <property type="match status" value="1"/>
</dbReference>
<dbReference type="PRINTS" id="PR00051">
    <property type="entry name" value="DNAA"/>
</dbReference>
<dbReference type="SMART" id="SM00382">
    <property type="entry name" value="AAA"/>
    <property type="match status" value="1"/>
</dbReference>
<dbReference type="SMART" id="SM00760">
    <property type="entry name" value="Bac_DnaA_C"/>
    <property type="match status" value="1"/>
</dbReference>
<dbReference type="SUPFAM" id="SSF52540">
    <property type="entry name" value="P-loop containing nucleoside triphosphate hydrolases"/>
    <property type="match status" value="1"/>
</dbReference>
<dbReference type="SUPFAM" id="SSF48295">
    <property type="entry name" value="TrpR-like"/>
    <property type="match status" value="1"/>
</dbReference>
<dbReference type="PROSITE" id="PS01008">
    <property type="entry name" value="DNAA"/>
    <property type="match status" value="1"/>
</dbReference>
<protein>
    <recommendedName>
        <fullName evidence="1">Chromosomal replication initiator protein DnaA</fullName>
    </recommendedName>
</protein>
<organism>
    <name type="scientific">Streptococcus agalactiae serotype Ia (strain ATCC 27591 / A909 / CDC SS700)</name>
    <dbReference type="NCBI Taxonomy" id="205921"/>
    <lineage>
        <taxon>Bacteria</taxon>
        <taxon>Bacillati</taxon>
        <taxon>Bacillota</taxon>
        <taxon>Bacilli</taxon>
        <taxon>Lactobacillales</taxon>
        <taxon>Streptococcaceae</taxon>
        <taxon>Streptococcus</taxon>
    </lineage>
</organism>
<feature type="chain" id="PRO_1000048737" description="Chromosomal replication initiator protein DnaA">
    <location>
        <begin position="1"/>
        <end position="453"/>
    </location>
</feature>
<feature type="region of interest" description="Domain I, interacts with DnaA modulators" evidence="1">
    <location>
        <begin position="1"/>
        <end position="78"/>
    </location>
</feature>
<feature type="region of interest" description="Domain II" evidence="1">
    <location>
        <begin position="78"/>
        <end position="112"/>
    </location>
</feature>
<feature type="region of interest" description="Domain III, AAA+ region" evidence="1">
    <location>
        <begin position="113"/>
        <end position="331"/>
    </location>
</feature>
<feature type="region of interest" description="Domain IV, binds dsDNA" evidence="1">
    <location>
        <begin position="332"/>
        <end position="453"/>
    </location>
</feature>
<feature type="binding site" evidence="1">
    <location>
        <position position="157"/>
    </location>
    <ligand>
        <name>ATP</name>
        <dbReference type="ChEBI" id="CHEBI:30616"/>
    </ligand>
</feature>
<feature type="binding site" evidence="1">
    <location>
        <position position="159"/>
    </location>
    <ligand>
        <name>ATP</name>
        <dbReference type="ChEBI" id="CHEBI:30616"/>
    </ligand>
</feature>
<feature type="binding site" evidence="1">
    <location>
        <position position="160"/>
    </location>
    <ligand>
        <name>ATP</name>
        <dbReference type="ChEBI" id="CHEBI:30616"/>
    </ligand>
</feature>
<feature type="binding site" evidence="1">
    <location>
        <position position="161"/>
    </location>
    <ligand>
        <name>ATP</name>
        <dbReference type="ChEBI" id="CHEBI:30616"/>
    </ligand>
</feature>
<reference key="1">
    <citation type="journal article" date="2005" name="Proc. Natl. Acad. Sci. U.S.A.">
        <title>Genome analysis of multiple pathogenic isolates of Streptococcus agalactiae: implications for the microbial 'pan-genome'.</title>
        <authorList>
            <person name="Tettelin H."/>
            <person name="Masignani V."/>
            <person name="Cieslewicz M.J."/>
            <person name="Donati C."/>
            <person name="Medini D."/>
            <person name="Ward N.L."/>
            <person name="Angiuoli S.V."/>
            <person name="Crabtree J."/>
            <person name="Jones A.L."/>
            <person name="Durkin A.S."/>
            <person name="DeBoy R.T."/>
            <person name="Davidsen T.M."/>
            <person name="Mora M."/>
            <person name="Scarselli M."/>
            <person name="Margarit y Ros I."/>
            <person name="Peterson J.D."/>
            <person name="Hauser C.R."/>
            <person name="Sundaram J.P."/>
            <person name="Nelson W.C."/>
            <person name="Madupu R."/>
            <person name="Brinkac L.M."/>
            <person name="Dodson R.J."/>
            <person name="Rosovitz M.J."/>
            <person name="Sullivan S.A."/>
            <person name="Daugherty S.C."/>
            <person name="Haft D.H."/>
            <person name="Selengut J."/>
            <person name="Gwinn M.L."/>
            <person name="Zhou L."/>
            <person name="Zafar N."/>
            <person name="Khouri H."/>
            <person name="Radune D."/>
            <person name="Dimitrov G."/>
            <person name="Watkins K."/>
            <person name="O'Connor K.J."/>
            <person name="Smith S."/>
            <person name="Utterback T.R."/>
            <person name="White O."/>
            <person name="Rubens C.E."/>
            <person name="Grandi G."/>
            <person name="Madoff L.C."/>
            <person name="Kasper D.L."/>
            <person name="Telford J.L."/>
            <person name="Wessels M.R."/>
            <person name="Rappuoli R."/>
            <person name="Fraser C.M."/>
        </authorList>
    </citation>
    <scope>NUCLEOTIDE SEQUENCE [LARGE SCALE GENOMIC DNA]</scope>
    <source>
        <strain>ATCC 27591 / A909 / CDC SS700</strain>
    </source>
</reference>
<sequence>MTENEQLFWNRVLELSRSQIAPAAYEFFVLEARLLKIEHQTAVITLDNIEMKKLFWEQNLGPVILTAGFEIFNAEITANYVSNDLHLQETSFSNYQQSSNEVNTLPIRKIDSNLKEKYTFANFVQGDENRWAVSASIAVADSPGTTYNPLFIWGGPGLGKTHLLNAIGNQVLRDNPNARVLYITAENFINEFVSHIRLDSMEELKEKFRNLDLLLIDDIQSLAKKTLGGTQEEFFNTFNALHTNDKQIVLTSDRNPNQLNDLEERLVTRFSWGLPVNITPPDFETRVAILTNKIQEYPYDFPQDTIEYLAGEFDSNVRELEGALKNISLVADFKHAKTITVDIAAEAIRARKNDGPIVTVIPIEEIQIQVGKFYGVTVKEIKATKRTQDIVLARQVAMYLAREMTDNSLPKIGKEFGGRDHSTVLHAYNKIKNMVAQDDNLRIEIETIKNKIR</sequence>
<evidence type="ECO:0000255" key="1">
    <source>
        <dbReference type="HAMAP-Rule" id="MF_00377"/>
    </source>
</evidence>
<name>DNAA_STRA1</name>
<keyword id="KW-0067">ATP-binding</keyword>
<keyword id="KW-0963">Cytoplasm</keyword>
<keyword id="KW-0235">DNA replication</keyword>
<keyword id="KW-0238">DNA-binding</keyword>
<keyword id="KW-0446">Lipid-binding</keyword>
<keyword id="KW-0547">Nucleotide-binding</keyword>
<accession>Q3K425</accession>
<comment type="function">
    <text evidence="1">Plays an essential role in the initiation and regulation of chromosomal replication. ATP-DnaA binds to the origin of replication (oriC) to initiate formation of the DNA replication initiation complex once per cell cycle. Binds the DnaA box (a 9 base pair repeat at the origin) and separates the double-stranded (ds)DNA. Forms a right-handed helical filament on oriC DNA; dsDNA binds to the exterior of the filament while single-stranded (ss)DNA is stabiized in the filament's interior. The ATP-DnaA-oriC complex binds and stabilizes one strand of the AT-rich DNA unwinding element (DUE), permitting loading of DNA polymerase. After initiation quickly degrades to an ADP-DnaA complex that is not apt for DNA replication. Binds acidic phospholipids.</text>
</comment>
<comment type="subunit">
    <text evidence="1">Oligomerizes as a right-handed, spiral filament on DNA at oriC.</text>
</comment>
<comment type="subcellular location">
    <subcellularLocation>
        <location evidence="1">Cytoplasm</location>
    </subcellularLocation>
</comment>
<comment type="domain">
    <text evidence="1">Domain I is involved in oligomerization and binding regulators, domain II is flexibile and of varying length in different bacteria, domain III forms the AAA+ region, while domain IV binds dsDNA.</text>
</comment>
<comment type="similarity">
    <text evidence="1">Belongs to the DnaA family.</text>
</comment>
<gene>
    <name evidence="1" type="primary">dnaA</name>
    <name type="ordered locus">SAK_0001</name>
</gene>
<proteinExistence type="inferred from homology"/>